<evidence type="ECO:0000255" key="1">
    <source>
        <dbReference type="HAMAP-Rule" id="MF_01325"/>
    </source>
</evidence>
<evidence type="ECO:0000305" key="2"/>
<keyword id="KW-1185">Reference proteome</keyword>
<keyword id="KW-0687">Ribonucleoprotein</keyword>
<keyword id="KW-0689">Ribosomal protein</keyword>
<keyword id="KW-0694">RNA-binding</keyword>
<keyword id="KW-0699">rRNA-binding</keyword>
<sequence length="228" mass="24594">MTKGILGRKVGMTQVFTESGELIAVTAVEATPNVVLQVKNAETDGYSAIQLGYQDKRTVLSNKPEQGHASKANTAPKRYVREIRNAGDEFNVGDEIKVDTFQAGEYVDVTGITKGHGFQGAIKRLGQSRGPMTHGSRYHRRPGSMGAIINRVFKGKLLPGRMGNNKRTMQNIAIVHVDVENNLLLLKGNVPGANKSLLTVKSTVKVNAKHPEVKMANASASATNSEEA</sequence>
<dbReference type="EMBL" id="CP000414">
    <property type="protein sequence ID" value="ABJ61327.1"/>
    <property type="molecule type" value="Genomic_DNA"/>
</dbReference>
<dbReference type="RefSeq" id="WP_011679133.1">
    <property type="nucleotide sequence ID" value="NC_008531.1"/>
</dbReference>
<dbReference type="SMR" id="Q03ZP5"/>
<dbReference type="EnsemblBacteria" id="ABJ61327">
    <property type="protein sequence ID" value="ABJ61327"/>
    <property type="gene ID" value="LEUM_0196"/>
</dbReference>
<dbReference type="GeneID" id="29576631"/>
<dbReference type="KEGG" id="lme:LEUM_0196"/>
<dbReference type="eggNOG" id="COG0087">
    <property type="taxonomic scope" value="Bacteria"/>
</dbReference>
<dbReference type="HOGENOM" id="CLU_044142_4_1_9"/>
<dbReference type="Proteomes" id="UP000000362">
    <property type="component" value="Chromosome"/>
</dbReference>
<dbReference type="GO" id="GO:0022625">
    <property type="term" value="C:cytosolic large ribosomal subunit"/>
    <property type="evidence" value="ECO:0007669"/>
    <property type="project" value="TreeGrafter"/>
</dbReference>
<dbReference type="GO" id="GO:0019843">
    <property type="term" value="F:rRNA binding"/>
    <property type="evidence" value="ECO:0007669"/>
    <property type="project" value="UniProtKB-UniRule"/>
</dbReference>
<dbReference type="GO" id="GO:0003735">
    <property type="term" value="F:structural constituent of ribosome"/>
    <property type="evidence" value="ECO:0007669"/>
    <property type="project" value="InterPro"/>
</dbReference>
<dbReference type="GO" id="GO:0006412">
    <property type="term" value="P:translation"/>
    <property type="evidence" value="ECO:0007669"/>
    <property type="project" value="UniProtKB-UniRule"/>
</dbReference>
<dbReference type="FunFam" id="2.40.30.10:FF:000004">
    <property type="entry name" value="50S ribosomal protein L3"/>
    <property type="match status" value="1"/>
</dbReference>
<dbReference type="FunFam" id="3.30.160.810:FF:000002">
    <property type="entry name" value="50S ribosomal protein L3"/>
    <property type="match status" value="1"/>
</dbReference>
<dbReference type="Gene3D" id="3.30.160.810">
    <property type="match status" value="1"/>
</dbReference>
<dbReference type="Gene3D" id="2.40.30.10">
    <property type="entry name" value="Translation factors"/>
    <property type="match status" value="1"/>
</dbReference>
<dbReference type="HAMAP" id="MF_01325_B">
    <property type="entry name" value="Ribosomal_uL3_B"/>
    <property type="match status" value="1"/>
</dbReference>
<dbReference type="InterPro" id="IPR000597">
    <property type="entry name" value="Ribosomal_uL3"/>
</dbReference>
<dbReference type="InterPro" id="IPR019927">
    <property type="entry name" value="Ribosomal_uL3_bac/org-type"/>
</dbReference>
<dbReference type="InterPro" id="IPR019926">
    <property type="entry name" value="Ribosomal_uL3_CS"/>
</dbReference>
<dbReference type="InterPro" id="IPR009000">
    <property type="entry name" value="Transl_B-barrel_sf"/>
</dbReference>
<dbReference type="NCBIfam" id="TIGR03625">
    <property type="entry name" value="L3_bact"/>
    <property type="match status" value="1"/>
</dbReference>
<dbReference type="PANTHER" id="PTHR11229">
    <property type="entry name" value="50S RIBOSOMAL PROTEIN L3"/>
    <property type="match status" value="1"/>
</dbReference>
<dbReference type="PANTHER" id="PTHR11229:SF16">
    <property type="entry name" value="LARGE RIBOSOMAL SUBUNIT PROTEIN UL3C"/>
    <property type="match status" value="1"/>
</dbReference>
<dbReference type="Pfam" id="PF00297">
    <property type="entry name" value="Ribosomal_L3"/>
    <property type="match status" value="1"/>
</dbReference>
<dbReference type="SUPFAM" id="SSF50447">
    <property type="entry name" value="Translation proteins"/>
    <property type="match status" value="1"/>
</dbReference>
<dbReference type="PROSITE" id="PS00474">
    <property type="entry name" value="RIBOSOMAL_L3"/>
    <property type="match status" value="1"/>
</dbReference>
<organism>
    <name type="scientific">Leuconostoc mesenteroides subsp. mesenteroides (strain ATCC 8293 / DSM 20343 / BCRC 11652 / CCM 1803 / JCM 6124 / NCDO 523 / NBRC 100496 / NCIMB 8023 / NCTC 12954 / NRRL B-1118 / 37Y)</name>
    <dbReference type="NCBI Taxonomy" id="203120"/>
    <lineage>
        <taxon>Bacteria</taxon>
        <taxon>Bacillati</taxon>
        <taxon>Bacillota</taxon>
        <taxon>Bacilli</taxon>
        <taxon>Lactobacillales</taxon>
        <taxon>Lactobacillaceae</taxon>
        <taxon>Leuconostoc</taxon>
    </lineage>
</organism>
<proteinExistence type="inferred from homology"/>
<name>RL3_LEUMM</name>
<gene>
    <name evidence="1" type="primary">rplC</name>
    <name type="ordered locus">LEUM_0196</name>
</gene>
<feature type="chain" id="PRO_1000052072" description="Large ribosomal subunit protein uL3">
    <location>
        <begin position="1"/>
        <end position="228"/>
    </location>
</feature>
<accession>Q03ZP5</accession>
<protein>
    <recommendedName>
        <fullName evidence="1">Large ribosomal subunit protein uL3</fullName>
    </recommendedName>
    <alternativeName>
        <fullName evidence="2">50S ribosomal protein L3</fullName>
    </alternativeName>
</protein>
<comment type="function">
    <text evidence="1">One of the primary rRNA binding proteins, it binds directly near the 3'-end of the 23S rRNA, where it nucleates assembly of the 50S subunit.</text>
</comment>
<comment type="subunit">
    <text evidence="1">Part of the 50S ribosomal subunit. Forms a cluster with proteins L14 and L19.</text>
</comment>
<comment type="similarity">
    <text evidence="1">Belongs to the universal ribosomal protein uL3 family.</text>
</comment>
<reference key="1">
    <citation type="journal article" date="2006" name="Proc. Natl. Acad. Sci. U.S.A.">
        <title>Comparative genomics of the lactic acid bacteria.</title>
        <authorList>
            <person name="Makarova K.S."/>
            <person name="Slesarev A."/>
            <person name="Wolf Y.I."/>
            <person name="Sorokin A."/>
            <person name="Mirkin B."/>
            <person name="Koonin E.V."/>
            <person name="Pavlov A."/>
            <person name="Pavlova N."/>
            <person name="Karamychev V."/>
            <person name="Polouchine N."/>
            <person name="Shakhova V."/>
            <person name="Grigoriev I."/>
            <person name="Lou Y."/>
            <person name="Rohksar D."/>
            <person name="Lucas S."/>
            <person name="Huang K."/>
            <person name="Goodstein D.M."/>
            <person name="Hawkins T."/>
            <person name="Plengvidhya V."/>
            <person name="Welker D."/>
            <person name="Hughes J."/>
            <person name="Goh Y."/>
            <person name="Benson A."/>
            <person name="Baldwin K."/>
            <person name="Lee J.-H."/>
            <person name="Diaz-Muniz I."/>
            <person name="Dosti B."/>
            <person name="Smeianov V."/>
            <person name="Wechter W."/>
            <person name="Barabote R."/>
            <person name="Lorca G."/>
            <person name="Altermann E."/>
            <person name="Barrangou R."/>
            <person name="Ganesan B."/>
            <person name="Xie Y."/>
            <person name="Rawsthorne H."/>
            <person name="Tamir D."/>
            <person name="Parker C."/>
            <person name="Breidt F."/>
            <person name="Broadbent J.R."/>
            <person name="Hutkins R."/>
            <person name="O'Sullivan D."/>
            <person name="Steele J."/>
            <person name="Unlu G."/>
            <person name="Saier M.H. Jr."/>
            <person name="Klaenhammer T."/>
            <person name="Richardson P."/>
            <person name="Kozyavkin S."/>
            <person name="Weimer B.C."/>
            <person name="Mills D.A."/>
        </authorList>
    </citation>
    <scope>NUCLEOTIDE SEQUENCE [LARGE SCALE GENOMIC DNA]</scope>
    <source>
        <strain>ATCC 8293 / DSM 20343 / BCRC 11652 / CCM 1803 / JCM 6124 / NCDO 523 / NBRC 100496 / NCIMB 8023 / NCTC 12954 / NRRL B-1118 / 37Y</strain>
    </source>
</reference>